<gene>
    <name evidence="1" type="primary">rpmB</name>
    <name type="ordered locus">GTNG_1033</name>
</gene>
<accession>A4IM55</accession>
<feature type="chain" id="PRO_1000007244" description="Large ribosomal subunit protein bL28">
    <location>
        <begin position="1"/>
        <end position="61"/>
    </location>
</feature>
<sequence length="61" mass="6954">MAKCFVTGKKKSFGNTRSHAMNANRRTWKANLQKVRILVDGKPKRVWVSARALKSGKIKRV</sequence>
<name>RL28_GEOTN</name>
<comment type="similarity">
    <text evidence="1">Belongs to the bacterial ribosomal protein bL28 family.</text>
</comment>
<keyword id="KW-0687">Ribonucleoprotein</keyword>
<keyword id="KW-0689">Ribosomal protein</keyword>
<dbReference type="EMBL" id="CP000557">
    <property type="protein sequence ID" value="ABO66409.1"/>
    <property type="molecule type" value="Genomic_DNA"/>
</dbReference>
<dbReference type="RefSeq" id="WP_008878630.1">
    <property type="nucleotide sequence ID" value="NC_009328.1"/>
</dbReference>
<dbReference type="SMR" id="A4IM55"/>
<dbReference type="GeneID" id="87621373"/>
<dbReference type="KEGG" id="gtn:GTNG_1033"/>
<dbReference type="eggNOG" id="COG0227">
    <property type="taxonomic scope" value="Bacteria"/>
</dbReference>
<dbReference type="HOGENOM" id="CLU_064548_7_1_9"/>
<dbReference type="Proteomes" id="UP000001578">
    <property type="component" value="Chromosome"/>
</dbReference>
<dbReference type="GO" id="GO:1990904">
    <property type="term" value="C:ribonucleoprotein complex"/>
    <property type="evidence" value="ECO:0007669"/>
    <property type="project" value="UniProtKB-KW"/>
</dbReference>
<dbReference type="GO" id="GO:0005840">
    <property type="term" value="C:ribosome"/>
    <property type="evidence" value="ECO:0007669"/>
    <property type="project" value="UniProtKB-KW"/>
</dbReference>
<dbReference type="GO" id="GO:0003735">
    <property type="term" value="F:structural constituent of ribosome"/>
    <property type="evidence" value="ECO:0007669"/>
    <property type="project" value="InterPro"/>
</dbReference>
<dbReference type="GO" id="GO:0006412">
    <property type="term" value="P:translation"/>
    <property type="evidence" value="ECO:0007669"/>
    <property type="project" value="UniProtKB-UniRule"/>
</dbReference>
<dbReference type="Gene3D" id="2.30.170.40">
    <property type="entry name" value="Ribosomal protein L28/L24"/>
    <property type="match status" value="1"/>
</dbReference>
<dbReference type="HAMAP" id="MF_00373">
    <property type="entry name" value="Ribosomal_bL28"/>
    <property type="match status" value="1"/>
</dbReference>
<dbReference type="InterPro" id="IPR050096">
    <property type="entry name" value="Bacterial_rp_bL28"/>
</dbReference>
<dbReference type="InterPro" id="IPR026569">
    <property type="entry name" value="Ribosomal_bL28"/>
</dbReference>
<dbReference type="InterPro" id="IPR034704">
    <property type="entry name" value="Ribosomal_bL28/bL31-like_sf"/>
</dbReference>
<dbReference type="InterPro" id="IPR001383">
    <property type="entry name" value="Ribosomal_bL28_bact-type"/>
</dbReference>
<dbReference type="InterPro" id="IPR037147">
    <property type="entry name" value="Ribosomal_bL28_sf"/>
</dbReference>
<dbReference type="NCBIfam" id="TIGR00009">
    <property type="entry name" value="L28"/>
    <property type="match status" value="1"/>
</dbReference>
<dbReference type="PANTHER" id="PTHR39080">
    <property type="entry name" value="50S RIBOSOMAL PROTEIN L28"/>
    <property type="match status" value="1"/>
</dbReference>
<dbReference type="PANTHER" id="PTHR39080:SF1">
    <property type="entry name" value="LARGE RIBOSOMAL SUBUNIT PROTEIN BL28A"/>
    <property type="match status" value="1"/>
</dbReference>
<dbReference type="Pfam" id="PF00830">
    <property type="entry name" value="Ribosomal_L28"/>
    <property type="match status" value="1"/>
</dbReference>
<dbReference type="SUPFAM" id="SSF143800">
    <property type="entry name" value="L28p-like"/>
    <property type="match status" value="1"/>
</dbReference>
<proteinExistence type="inferred from homology"/>
<protein>
    <recommendedName>
        <fullName evidence="1">Large ribosomal subunit protein bL28</fullName>
    </recommendedName>
    <alternativeName>
        <fullName evidence="2">50S ribosomal protein L28</fullName>
    </alternativeName>
</protein>
<evidence type="ECO:0000255" key="1">
    <source>
        <dbReference type="HAMAP-Rule" id="MF_00373"/>
    </source>
</evidence>
<evidence type="ECO:0000305" key="2"/>
<organism>
    <name type="scientific">Geobacillus thermodenitrificans (strain NG80-2)</name>
    <dbReference type="NCBI Taxonomy" id="420246"/>
    <lineage>
        <taxon>Bacteria</taxon>
        <taxon>Bacillati</taxon>
        <taxon>Bacillota</taxon>
        <taxon>Bacilli</taxon>
        <taxon>Bacillales</taxon>
        <taxon>Anoxybacillaceae</taxon>
        <taxon>Geobacillus</taxon>
    </lineage>
</organism>
<reference key="1">
    <citation type="journal article" date="2007" name="Proc. Natl. Acad. Sci. U.S.A.">
        <title>Genome and proteome of long-chain alkane degrading Geobacillus thermodenitrificans NG80-2 isolated from a deep-subsurface oil reservoir.</title>
        <authorList>
            <person name="Feng L."/>
            <person name="Wang W."/>
            <person name="Cheng J."/>
            <person name="Ren Y."/>
            <person name="Zhao G."/>
            <person name="Gao C."/>
            <person name="Tang Y."/>
            <person name="Liu X."/>
            <person name="Han W."/>
            <person name="Peng X."/>
            <person name="Liu R."/>
            <person name="Wang L."/>
        </authorList>
    </citation>
    <scope>NUCLEOTIDE SEQUENCE [LARGE SCALE GENOMIC DNA]</scope>
    <source>
        <strain>NG80-2</strain>
    </source>
</reference>